<protein>
    <recommendedName>
        <fullName>DNA replication complex GINS protein PSF3</fullName>
    </recommendedName>
    <alternativeName>
        <fullName>GINS complex subunit 3</fullName>
    </alternativeName>
</protein>
<reference key="1">
    <citation type="journal article" date="2004" name="Nat. Genet.">
        <title>Complete sequencing and characterization of 21,243 full-length human cDNAs.</title>
        <authorList>
            <person name="Ota T."/>
            <person name="Suzuki Y."/>
            <person name="Nishikawa T."/>
            <person name="Otsuki T."/>
            <person name="Sugiyama T."/>
            <person name="Irie R."/>
            <person name="Wakamatsu A."/>
            <person name="Hayashi K."/>
            <person name="Sato H."/>
            <person name="Nagai K."/>
            <person name="Kimura K."/>
            <person name="Makita H."/>
            <person name="Sekine M."/>
            <person name="Obayashi M."/>
            <person name="Nishi T."/>
            <person name="Shibahara T."/>
            <person name="Tanaka T."/>
            <person name="Ishii S."/>
            <person name="Yamamoto J."/>
            <person name="Saito K."/>
            <person name="Kawai Y."/>
            <person name="Isono Y."/>
            <person name="Nakamura Y."/>
            <person name="Nagahari K."/>
            <person name="Murakami K."/>
            <person name="Yasuda T."/>
            <person name="Iwayanagi T."/>
            <person name="Wagatsuma M."/>
            <person name="Shiratori A."/>
            <person name="Sudo H."/>
            <person name="Hosoiri T."/>
            <person name="Kaku Y."/>
            <person name="Kodaira H."/>
            <person name="Kondo H."/>
            <person name="Sugawara M."/>
            <person name="Takahashi M."/>
            <person name="Kanda K."/>
            <person name="Yokoi T."/>
            <person name="Furuya T."/>
            <person name="Kikkawa E."/>
            <person name="Omura Y."/>
            <person name="Abe K."/>
            <person name="Kamihara K."/>
            <person name="Katsuta N."/>
            <person name="Sato K."/>
            <person name="Tanikawa M."/>
            <person name="Yamazaki M."/>
            <person name="Ninomiya K."/>
            <person name="Ishibashi T."/>
            <person name="Yamashita H."/>
            <person name="Murakawa K."/>
            <person name="Fujimori K."/>
            <person name="Tanai H."/>
            <person name="Kimata M."/>
            <person name="Watanabe M."/>
            <person name="Hiraoka S."/>
            <person name="Chiba Y."/>
            <person name="Ishida S."/>
            <person name="Ono Y."/>
            <person name="Takiguchi S."/>
            <person name="Watanabe S."/>
            <person name="Yosida M."/>
            <person name="Hotuta T."/>
            <person name="Kusano J."/>
            <person name="Kanehori K."/>
            <person name="Takahashi-Fujii A."/>
            <person name="Hara H."/>
            <person name="Tanase T.-O."/>
            <person name="Nomura Y."/>
            <person name="Togiya S."/>
            <person name="Komai F."/>
            <person name="Hara R."/>
            <person name="Takeuchi K."/>
            <person name="Arita M."/>
            <person name="Imose N."/>
            <person name="Musashino K."/>
            <person name="Yuuki H."/>
            <person name="Oshima A."/>
            <person name="Sasaki N."/>
            <person name="Aotsuka S."/>
            <person name="Yoshikawa Y."/>
            <person name="Matsunawa H."/>
            <person name="Ichihara T."/>
            <person name="Shiohata N."/>
            <person name="Sano S."/>
            <person name="Moriya S."/>
            <person name="Momiyama H."/>
            <person name="Satoh N."/>
            <person name="Takami S."/>
            <person name="Terashima Y."/>
            <person name="Suzuki O."/>
            <person name="Nakagawa S."/>
            <person name="Senoh A."/>
            <person name="Mizoguchi H."/>
            <person name="Goto Y."/>
            <person name="Shimizu F."/>
            <person name="Wakebe H."/>
            <person name="Hishigaki H."/>
            <person name="Watanabe T."/>
            <person name="Sugiyama A."/>
            <person name="Takemoto M."/>
            <person name="Kawakami B."/>
            <person name="Yamazaki M."/>
            <person name="Watanabe K."/>
            <person name="Kumagai A."/>
            <person name="Itakura S."/>
            <person name="Fukuzumi Y."/>
            <person name="Fujimori Y."/>
            <person name="Komiyama M."/>
            <person name="Tashiro H."/>
            <person name="Tanigami A."/>
            <person name="Fujiwara T."/>
            <person name="Ono T."/>
            <person name="Yamada K."/>
            <person name="Fujii Y."/>
            <person name="Ozaki K."/>
            <person name="Hirao M."/>
            <person name="Ohmori Y."/>
            <person name="Kawabata A."/>
            <person name="Hikiji T."/>
            <person name="Kobatake N."/>
            <person name="Inagaki H."/>
            <person name="Ikema Y."/>
            <person name="Okamoto S."/>
            <person name="Okitani R."/>
            <person name="Kawakami T."/>
            <person name="Noguchi S."/>
            <person name="Itoh T."/>
            <person name="Shigeta K."/>
            <person name="Senba T."/>
            <person name="Matsumura K."/>
            <person name="Nakajima Y."/>
            <person name="Mizuno T."/>
            <person name="Morinaga M."/>
            <person name="Sasaki M."/>
            <person name="Togashi T."/>
            <person name="Oyama M."/>
            <person name="Hata H."/>
            <person name="Watanabe M."/>
            <person name="Komatsu T."/>
            <person name="Mizushima-Sugano J."/>
            <person name="Satoh T."/>
            <person name="Shirai Y."/>
            <person name="Takahashi Y."/>
            <person name="Nakagawa K."/>
            <person name="Okumura K."/>
            <person name="Nagase T."/>
            <person name="Nomura N."/>
            <person name="Kikuchi H."/>
            <person name="Masuho Y."/>
            <person name="Yamashita R."/>
            <person name="Nakai K."/>
            <person name="Yada T."/>
            <person name="Nakamura Y."/>
            <person name="Ohara O."/>
            <person name="Isogai T."/>
            <person name="Sugano S."/>
        </authorList>
    </citation>
    <scope>NUCLEOTIDE SEQUENCE [LARGE SCALE MRNA] (ISOFORMS 1 AND 2)</scope>
</reference>
<reference key="2">
    <citation type="submission" date="2004-06" db="EMBL/GenBank/DDBJ databases">
        <title>Cloning of human full open reading frames in Gateway(TM) system entry vector (pDONR201).</title>
        <authorList>
            <person name="Ebert L."/>
            <person name="Schick M."/>
            <person name="Neubert P."/>
            <person name="Schatten R."/>
            <person name="Henze S."/>
            <person name="Korn B."/>
        </authorList>
    </citation>
    <scope>NUCLEOTIDE SEQUENCE [LARGE SCALE MRNA] (ISOFORM 2)</scope>
</reference>
<reference key="3">
    <citation type="journal article" date="2004" name="Nature">
        <title>The sequence and analysis of duplication-rich human chromosome 16.</title>
        <authorList>
            <person name="Martin J."/>
            <person name="Han C."/>
            <person name="Gordon L.A."/>
            <person name="Terry A."/>
            <person name="Prabhakar S."/>
            <person name="She X."/>
            <person name="Xie G."/>
            <person name="Hellsten U."/>
            <person name="Chan Y.M."/>
            <person name="Altherr M."/>
            <person name="Couronne O."/>
            <person name="Aerts A."/>
            <person name="Bajorek E."/>
            <person name="Black S."/>
            <person name="Blumer H."/>
            <person name="Branscomb E."/>
            <person name="Brown N.C."/>
            <person name="Bruno W.J."/>
            <person name="Buckingham J.M."/>
            <person name="Callen D.F."/>
            <person name="Campbell C.S."/>
            <person name="Campbell M.L."/>
            <person name="Campbell E.W."/>
            <person name="Caoile C."/>
            <person name="Challacombe J.F."/>
            <person name="Chasteen L.A."/>
            <person name="Chertkov O."/>
            <person name="Chi H.C."/>
            <person name="Christensen M."/>
            <person name="Clark L.M."/>
            <person name="Cohn J.D."/>
            <person name="Denys M."/>
            <person name="Detter J.C."/>
            <person name="Dickson M."/>
            <person name="Dimitrijevic-Bussod M."/>
            <person name="Escobar J."/>
            <person name="Fawcett J.J."/>
            <person name="Flowers D."/>
            <person name="Fotopulos D."/>
            <person name="Glavina T."/>
            <person name="Gomez M."/>
            <person name="Gonzales E."/>
            <person name="Goodstein D."/>
            <person name="Goodwin L.A."/>
            <person name="Grady D.L."/>
            <person name="Grigoriev I."/>
            <person name="Groza M."/>
            <person name="Hammon N."/>
            <person name="Hawkins T."/>
            <person name="Haydu L."/>
            <person name="Hildebrand C.E."/>
            <person name="Huang W."/>
            <person name="Israni S."/>
            <person name="Jett J."/>
            <person name="Jewett P.B."/>
            <person name="Kadner K."/>
            <person name="Kimball H."/>
            <person name="Kobayashi A."/>
            <person name="Krawczyk M.-C."/>
            <person name="Leyba T."/>
            <person name="Longmire J.L."/>
            <person name="Lopez F."/>
            <person name="Lou Y."/>
            <person name="Lowry S."/>
            <person name="Ludeman T."/>
            <person name="Manohar C.F."/>
            <person name="Mark G.A."/>
            <person name="McMurray K.L."/>
            <person name="Meincke L.J."/>
            <person name="Morgan J."/>
            <person name="Moyzis R.K."/>
            <person name="Mundt M.O."/>
            <person name="Munk A.C."/>
            <person name="Nandkeshwar R.D."/>
            <person name="Pitluck S."/>
            <person name="Pollard M."/>
            <person name="Predki P."/>
            <person name="Parson-Quintana B."/>
            <person name="Ramirez L."/>
            <person name="Rash S."/>
            <person name="Retterer J."/>
            <person name="Ricke D.O."/>
            <person name="Robinson D.L."/>
            <person name="Rodriguez A."/>
            <person name="Salamov A."/>
            <person name="Saunders E.H."/>
            <person name="Scott D."/>
            <person name="Shough T."/>
            <person name="Stallings R.L."/>
            <person name="Stalvey M."/>
            <person name="Sutherland R.D."/>
            <person name="Tapia R."/>
            <person name="Tesmer J.G."/>
            <person name="Thayer N."/>
            <person name="Thompson L.S."/>
            <person name="Tice H."/>
            <person name="Torney D.C."/>
            <person name="Tran-Gyamfi M."/>
            <person name="Tsai M."/>
            <person name="Ulanovsky L.E."/>
            <person name="Ustaszewska A."/>
            <person name="Vo N."/>
            <person name="White P.S."/>
            <person name="Williams A.L."/>
            <person name="Wills P.L."/>
            <person name="Wu J.-R."/>
            <person name="Wu K."/>
            <person name="Yang J."/>
            <person name="DeJong P."/>
            <person name="Bruce D."/>
            <person name="Doggett N.A."/>
            <person name="Deaven L."/>
            <person name="Schmutz J."/>
            <person name="Grimwood J."/>
            <person name="Richardson P."/>
            <person name="Rokhsar D.S."/>
            <person name="Eichler E.E."/>
            <person name="Gilna P."/>
            <person name="Lucas S.M."/>
            <person name="Myers R.M."/>
            <person name="Rubin E.M."/>
            <person name="Pennacchio L.A."/>
        </authorList>
    </citation>
    <scope>NUCLEOTIDE SEQUENCE [LARGE SCALE GENOMIC DNA]</scope>
</reference>
<reference key="4">
    <citation type="submission" date="2005-07" db="EMBL/GenBank/DDBJ databases">
        <authorList>
            <person name="Mural R.J."/>
            <person name="Istrail S."/>
            <person name="Sutton G.G."/>
            <person name="Florea L."/>
            <person name="Halpern A.L."/>
            <person name="Mobarry C.M."/>
            <person name="Lippert R."/>
            <person name="Walenz B."/>
            <person name="Shatkay H."/>
            <person name="Dew I."/>
            <person name="Miller J.R."/>
            <person name="Flanigan M.J."/>
            <person name="Edwards N.J."/>
            <person name="Bolanos R."/>
            <person name="Fasulo D."/>
            <person name="Halldorsson B.V."/>
            <person name="Hannenhalli S."/>
            <person name="Turner R."/>
            <person name="Yooseph S."/>
            <person name="Lu F."/>
            <person name="Nusskern D.R."/>
            <person name="Shue B.C."/>
            <person name="Zheng X.H."/>
            <person name="Zhong F."/>
            <person name="Delcher A.L."/>
            <person name="Huson D.H."/>
            <person name="Kravitz S.A."/>
            <person name="Mouchard L."/>
            <person name="Reinert K."/>
            <person name="Remington K.A."/>
            <person name="Clark A.G."/>
            <person name="Waterman M.S."/>
            <person name="Eichler E.E."/>
            <person name="Adams M.D."/>
            <person name="Hunkapiller M.W."/>
            <person name="Myers E.W."/>
            <person name="Venter J.C."/>
        </authorList>
    </citation>
    <scope>NUCLEOTIDE SEQUENCE [LARGE SCALE GENOMIC DNA]</scope>
</reference>
<reference key="5">
    <citation type="journal article" date="2004" name="Genome Res.">
        <title>The status, quality, and expansion of the NIH full-length cDNA project: the Mammalian Gene Collection (MGC).</title>
        <authorList>
            <consortium name="The MGC Project Team"/>
        </authorList>
    </citation>
    <scope>NUCLEOTIDE SEQUENCE [LARGE SCALE MRNA] (ISOFORM 1)</scope>
    <source>
        <tissue>Muscle</tissue>
        <tissue>Skin</tissue>
    </source>
</reference>
<reference key="6">
    <citation type="journal article" date="2007" name="EMBO Rep.">
        <title>The human GINS complex binds to and specifically stimulates human DNA polymerase alpha-primase.</title>
        <authorList>
            <person name="De Falco M."/>
            <person name="Ferrari E."/>
            <person name="De Felice M."/>
            <person name="Rossi M."/>
            <person name="Hubscher U."/>
            <person name="Pisani F.M."/>
        </authorList>
    </citation>
    <scope>SUBUNIT</scope>
    <scope>INTERACTION WITH DNA PRIMASE</scope>
</reference>
<reference key="7">
    <citation type="journal article" date="2011" name="BMC Syst. Biol.">
        <title>Initial characterization of the human central proteome.</title>
        <authorList>
            <person name="Burkard T.R."/>
            <person name="Planyavsky M."/>
            <person name="Kaupe I."/>
            <person name="Breitwieser F.P."/>
            <person name="Buerckstuemmer T."/>
            <person name="Bennett K.L."/>
            <person name="Superti-Furga G."/>
            <person name="Colinge J."/>
        </authorList>
    </citation>
    <scope>IDENTIFICATION BY MASS SPECTROMETRY [LARGE SCALE ANALYSIS]</scope>
</reference>
<reference key="8">
    <citation type="journal article" date="2017" name="J. Clin. Invest.">
        <title>Inherited GINS1 deficiency underlies growth retardation along with neutropenia and NK cell deficiency.</title>
        <authorList>
            <person name="Cottineau J."/>
            <person name="Kottemann M.C."/>
            <person name="Lach F.P."/>
            <person name="Kang Y.H."/>
            <person name="Vely F."/>
            <person name="Deenick E.K."/>
            <person name="Lazarov T."/>
            <person name="Gineau L."/>
            <person name="Wang Y."/>
            <person name="Farina A."/>
            <person name="Chansel M."/>
            <person name="Lorenzo L."/>
            <person name="Piperoglou C."/>
            <person name="Ma C.S."/>
            <person name="Nitschke P."/>
            <person name="Belkadi A."/>
            <person name="Itan Y."/>
            <person name="Boisson B."/>
            <person name="Jabot-Hanin F."/>
            <person name="Picard C."/>
            <person name="Bustamante J."/>
            <person name="Eidenschenk C."/>
            <person name="Boucherit S."/>
            <person name="Aladjidi N."/>
            <person name="Lacombe D."/>
            <person name="Barat P."/>
            <person name="Qasim W."/>
            <person name="Hurst J.A."/>
            <person name="Pollard A.J."/>
            <person name="Uhlig H.H."/>
            <person name="Fieschi C."/>
            <person name="Michon J."/>
            <person name="Bermudez V.P."/>
            <person name="Abel L."/>
            <person name="de Villartay J.P."/>
            <person name="Geissmann F."/>
            <person name="Tangye S.G."/>
            <person name="Hurwitz J."/>
            <person name="Vivier E."/>
            <person name="Casanova J.L."/>
            <person name="Smogorzewska A."/>
            <person name="Jouanguy E."/>
        </authorList>
    </citation>
    <scope>INTERACTION WITH GINS1</scope>
</reference>
<reference key="9">
    <citation type="journal article" date="2022" name="Nature">
        <title>Fast and efficient DNA replication with purified human proteins.</title>
        <authorList>
            <person name="Baris Y."/>
            <person name="Taylor M.R.G."/>
            <person name="Aria V."/>
            <person name="Yeeles J.T.P."/>
        </authorList>
    </citation>
    <scope>FUNCTION</scope>
    <scope>SUBCELLULAR LOCATION</scope>
</reference>
<reference key="10">
    <citation type="journal article" date="2007" name="EMBO Rep.">
        <title>Molecular architecture of the human GINS complex.</title>
        <authorList>
            <person name="Boskovic J."/>
            <person name="Coloma J."/>
            <person name="Aparicio T."/>
            <person name="Zhou M."/>
            <person name="Robinson C.V."/>
            <person name="Mendez J."/>
            <person name="Montoya G."/>
        </authorList>
    </citation>
    <scope>STRUCTURE BY ELECTRON MICROSCOPY (33 ANGSTROMS) IN COMPLEX WITH GINS1; GINS2 AND GINS4</scope>
    <scope>SUBUNIT</scope>
    <scope>MASS SPECTROMETRY OF GINS COMPLEX</scope>
</reference>
<reference key="11">
    <citation type="journal article" date="2007" name="Genes Dev.">
        <title>Crystal structure of the human GINS complex.</title>
        <authorList>
            <person name="Choi J.M."/>
            <person name="Lim H.S."/>
            <person name="Kim J.J."/>
            <person name="Song O.K."/>
            <person name="Cho Y."/>
        </authorList>
    </citation>
    <scope>X-RAY CRYSTALLOGRAPHY (3.0 ANGSTROMS) IN COMPLEX WITH GINS1; GINS2 AND GINS4</scope>
    <scope>SUBUNIT</scope>
</reference>
<reference key="12">
    <citation type="journal article" date="2007" name="Nat. Struct. Mol. Biol.">
        <title>Structure of the human GINS complex and its assembly and functional interface in replication initiation.</title>
        <authorList>
            <person name="Kamada K."/>
            <person name="Kubota Y."/>
            <person name="Arata T."/>
            <person name="Shindo Y."/>
            <person name="Hanaoka F."/>
        </authorList>
    </citation>
    <scope>FUNCTION</scope>
    <scope>X-RAY CRYSTALLOGRAPHY (2.3 ANGSTROMS) IN COMPLEX WITH GINS1; GINS2 AND GINS4</scope>
    <scope>SUBUNIT</scope>
</reference>
<reference key="13">
    <citation type="journal article" date="2007" name="Proc. Natl. Acad. Sci. U.S.A.">
        <title>Crystal structure of the GINS complex and functional insights into its role in DNA replication.</title>
        <authorList>
            <person name="Chang Y.P."/>
            <person name="Wang G."/>
            <person name="Bermudez V."/>
            <person name="Hurwitz J."/>
            <person name="Chen X.S."/>
        </authorList>
    </citation>
    <scope>X-RAY CRYSTALLOGRAPHY (2.36 ANGSTROMS) OF 2-216 IN COMPLEX WITH GINS1; GINS2 AND GINS4</scope>
    <scope>SUBUNIT</scope>
    <scope>REGION</scope>
</reference>
<reference evidence="16 17" key="14">
    <citation type="journal article" date="2020" name="Nucleic Acids Res.">
        <title>CryoEM structures of human CMG-ATPgammaS-DNA and CMG-AND-1 complexes.</title>
        <authorList>
            <person name="Rzechorzek N.J."/>
            <person name="Hardwick S.W."/>
            <person name="Jatikusumo V.A."/>
            <person name="Chirgadze D.Y."/>
            <person name="Pellegrini L."/>
        </authorList>
    </citation>
    <scope>STRUCTURE BY ELECTRON MICROSCOPY (3.29 ANGSTROMS) IN CMG COMPLEX</scope>
    <scope>SUBUNIT</scope>
    <scope>FUNCTION</scope>
</reference>
<reference evidence="19" key="15">
    <citation type="journal article" date="2021" name="Nature">
        <title>A conserved mechanism for regulating replisome disassembly in eukaryotes.</title>
        <authorList>
            <person name="Jenkyn-Bedford M."/>
            <person name="Jones M.L."/>
            <person name="Baris Y."/>
            <person name="Labib K.P.M."/>
            <person name="Cannone G."/>
            <person name="Yeeles J.T.P."/>
            <person name="Deegan T.D."/>
        </authorList>
    </citation>
    <scope>STRUCTURE BY ELECTRON MICROSCOPY (2.80 ANGSTROMS) IN REPLISOME</scope>
    <scope>SUBUNIT</scope>
    <scope>FUNCTION</scope>
</reference>
<reference evidence="18" key="16">
    <citation type="journal article" date="2021" name="EMBO J.">
        <title>Structure of a human replisome shows the organisation and interactions of a DNA replication machine.</title>
        <authorList>
            <person name="Jones M.L."/>
            <person name="Baris Y."/>
            <person name="Taylor M.R.G."/>
            <person name="Yeeles J.T.P."/>
        </authorList>
    </citation>
    <scope>STRUCTURE BY ELECTRON MICROSCOPY (3.20 ANGSTROMS) IN REPLISOME</scope>
    <scope>SUBUNIT</scope>
    <scope>FUNCTION</scope>
</reference>
<proteinExistence type="evidence at protein level"/>
<gene>
    <name evidence="15" type="primary">GINS3</name>
    <name type="synonym">PSF3</name>
</gene>
<organism>
    <name type="scientific">Homo sapiens</name>
    <name type="common">Human</name>
    <dbReference type="NCBI Taxonomy" id="9606"/>
    <lineage>
        <taxon>Eukaryota</taxon>
        <taxon>Metazoa</taxon>
        <taxon>Chordata</taxon>
        <taxon>Craniata</taxon>
        <taxon>Vertebrata</taxon>
        <taxon>Euteleostomi</taxon>
        <taxon>Mammalia</taxon>
        <taxon>Eutheria</taxon>
        <taxon>Euarchontoglires</taxon>
        <taxon>Primates</taxon>
        <taxon>Haplorrhini</taxon>
        <taxon>Catarrhini</taxon>
        <taxon>Hominidae</taxon>
        <taxon>Homo</taxon>
    </lineage>
</organism>
<dbReference type="EMBL" id="AK023974">
    <property type="protein sequence ID" value="BAB14747.1"/>
    <property type="molecule type" value="mRNA"/>
</dbReference>
<dbReference type="EMBL" id="AK315622">
    <property type="protein sequence ID" value="BAG37990.1"/>
    <property type="molecule type" value="mRNA"/>
</dbReference>
<dbReference type="EMBL" id="CR457283">
    <property type="protein sequence ID" value="CAG33564.1"/>
    <property type="molecule type" value="mRNA"/>
</dbReference>
<dbReference type="EMBL" id="AC009107">
    <property type="status" value="NOT_ANNOTATED_CDS"/>
    <property type="molecule type" value="Genomic_DNA"/>
</dbReference>
<dbReference type="EMBL" id="AC009118">
    <property type="status" value="NOT_ANNOTATED_CDS"/>
    <property type="molecule type" value="Genomic_DNA"/>
</dbReference>
<dbReference type="EMBL" id="AC084063">
    <property type="status" value="NOT_ANNOTATED_CDS"/>
    <property type="molecule type" value="Genomic_DNA"/>
</dbReference>
<dbReference type="EMBL" id="CH471092">
    <property type="protein sequence ID" value="EAW82973.1"/>
    <property type="molecule type" value="Genomic_DNA"/>
</dbReference>
<dbReference type="EMBL" id="CH471092">
    <property type="protein sequence ID" value="EAW82976.1"/>
    <property type="molecule type" value="Genomic_DNA"/>
</dbReference>
<dbReference type="EMBL" id="BC005879">
    <property type="protein sequence ID" value="AAH05879.1"/>
    <property type="molecule type" value="mRNA"/>
</dbReference>
<dbReference type="EMBL" id="BC014437">
    <property type="protein sequence ID" value="AAH14437.1"/>
    <property type="molecule type" value="mRNA"/>
</dbReference>
<dbReference type="CCDS" id="CCDS10796.1">
    <molecule id="Q9BRX5-1"/>
</dbReference>
<dbReference type="CCDS" id="CCDS45498.1">
    <molecule id="Q9BRX5-3"/>
</dbReference>
<dbReference type="CCDS" id="CCDS45499.1">
    <molecule id="Q9BRX5-2"/>
</dbReference>
<dbReference type="RefSeq" id="NP_001119601.1">
    <molecule id="Q9BRX5-3"/>
    <property type="nucleotide sequence ID" value="NM_001126129.2"/>
</dbReference>
<dbReference type="RefSeq" id="NP_001119602.1">
    <molecule id="Q9BRX5-2"/>
    <property type="nucleotide sequence ID" value="NM_001126130.2"/>
</dbReference>
<dbReference type="RefSeq" id="NP_073607.2">
    <molecule id="Q9BRX5-1"/>
    <property type="nucleotide sequence ID" value="NM_022770.3"/>
</dbReference>
<dbReference type="RefSeq" id="XP_054169705.1">
    <molecule id="Q9BRX5-3"/>
    <property type="nucleotide sequence ID" value="XM_054313730.1"/>
</dbReference>
<dbReference type="RefSeq" id="XP_054169706.1">
    <molecule id="Q9BRX5-3"/>
    <property type="nucleotide sequence ID" value="XM_054313731.1"/>
</dbReference>
<dbReference type="RefSeq" id="XP_054169707.1">
    <molecule id="Q9BRX5-3"/>
    <property type="nucleotide sequence ID" value="XM_054313732.1"/>
</dbReference>
<dbReference type="RefSeq" id="XP_054169708.1">
    <molecule id="Q9BRX5-3"/>
    <property type="nucleotide sequence ID" value="XM_054313733.1"/>
</dbReference>
<dbReference type="RefSeq" id="XP_054169709.1">
    <molecule id="Q9BRX5-3"/>
    <property type="nucleotide sequence ID" value="XM_054313734.1"/>
</dbReference>
<dbReference type="RefSeq" id="XP_054169710.1">
    <molecule id="Q9BRX5-1"/>
    <property type="nucleotide sequence ID" value="XM_054313735.1"/>
</dbReference>
<dbReference type="RefSeq" id="XP_054169711.1">
    <molecule id="Q9BRX5-2"/>
    <property type="nucleotide sequence ID" value="XM_054313736.1"/>
</dbReference>
<dbReference type="PDB" id="2E9X">
    <property type="method" value="X-ray"/>
    <property type="resolution" value="2.30 A"/>
    <property type="chains" value="C/G=1-216"/>
</dbReference>
<dbReference type="PDB" id="2EHO">
    <property type="method" value="X-ray"/>
    <property type="resolution" value="3.00 A"/>
    <property type="chains" value="D/H/L=1-216"/>
</dbReference>
<dbReference type="PDB" id="2Q9Q">
    <property type="method" value="X-ray"/>
    <property type="resolution" value="2.36 A"/>
    <property type="chains" value="D/H=2-216"/>
</dbReference>
<dbReference type="PDB" id="6XTX">
    <property type="method" value="EM"/>
    <property type="resolution" value="3.29 A"/>
    <property type="chains" value="C=1-216"/>
</dbReference>
<dbReference type="PDB" id="6XTY">
    <property type="method" value="EM"/>
    <property type="resolution" value="6.77 A"/>
    <property type="chains" value="C=1-216"/>
</dbReference>
<dbReference type="PDB" id="7PFO">
    <property type="method" value="EM"/>
    <property type="resolution" value="3.20 A"/>
    <property type="chains" value="F=1-216"/>
</dbReference>
<dbReference type="PDB" id="7PLO">
    <property type="method" value="EM"/>
    <property type="resolution" value="2.80 A"/>
    <property type="chains" value="F=1-216"/>
</dbReference>
<dbReference type="PDB" id="8B9D">
    <property type="method" value="EM"/>
    <property type="resolution" value="3.40 A"/>
    <property type="chains" value="F=1-216"/>
</dbReference>
<dbReference type="PDB" id="8OK2">
    <property type="method" value="EM"/>
    <property type="resolution" value="4.10 A"/>
    <property type="chains" value="C=1-216"/>
</dbReference>
<dbReference type="PDBsum" id="2E9X"/>
<dbReference type="PDBsum" id="2EHO"/>
<dbReference type="PDBsum" id="2Q9Q"/>
<dbReference type="PDBsum" id="6XTX"/>
<dbReference type="PDBsum" id="6XTY"/>
<dbReference type="PDBsum" id="7PFO"/>
<dbReference type="PDBsum" id="7PLO"/>
<dbReference type="PDBsum" id="8B9D"/>
<dbReference type="PDBsum" id="8OK2"/>
<dbReference type="EMDB" id="EMD-10619"/>
<dbReference type="EMDB" id="EMD-10621"/>
<dbReference type="EMDB" id="EMD-13375"/>
<dbReference type="EMDB" id="EMD-13494"/>
<dbReference type="EMDB" id="EMD-16916"/>
<dbReference type="SMR" id="Q9BRX5"/>
<dbReference type="BioGRID" id="122295">
    <property type="interactions" value="75"/>
</dbReference>
<dbReference type="ComplexPortal" id="CPX-787">
    <property type="entry name" value="GINS complex"/>
</dbReference>
<dbReference type="CORUM" id="Q9BRX5"/>
<dbReference type="DIP" id="DIP-29333N"/>
<dbReference type="FunCoup" id="Q9BRX5">
    <property type="interactions" value="2184"/>
</dbReference>
<dbReference type="IntAct" id="Q9BRX5">
    <property type="interactions" value="39"/>
</dbReference>
<dbReference type="MINT" id="Q9BRX5"/>
<dbReference type="STRING" id="9606.ENSP00000401018"/>
<dbReference type="iPTMnet" id="Q9BRX5"/>
<dbReference type="PhosphoSitePlus" id="Q9BRX5"/>
<dbReference type="BioMuta" id="GINS3"/>
<dbReference type="DMDM" id="74732939"/>
<dbReference type="jPOST" id="Q9BRX5"/>
<dbReference type="MassIVE" id="Q9BRX5"/>
<dbReference type="PeptideAtlas" id="Q9BRX5"/>
<dbReference type="ProteomicsDB" id="19126"/>
<dbReference type="ProteomicsDB" id="78847">
    <molecule id="Q9BRX5-1"/>
</dbReference>
<dbReference type="ProteomicsDB" id="78848">
    <molecule id="Q9BRX5-2"/>
</dbReference>
<dbReference type="Pumba" id="Q9BRX5"/>
<dbReference type="Antibodypedia" id="29079">
    <property type="antibodies" value="98 antibodies from 20 providers"/>
</dbReference>
<dbReference type="DNASU" id="64785"/>
<dbReference type="Ensembl" id="ENST00000318129.6">
    <molecule id="Q9BRX5-1"/>
    <property type="protein sequence ID" value="ENSP00000318196.6"/>
    <property type="gene ID" value="ENSG00000181938.14"/>
</dbReference>
<dbReference type="Ensembl" id="ENST00000328514.11">
    <molecule id="Q9BRX5-2"/>
    <property type="protein sequence ID" value="ENSP00000327449.7"/>
    <property type="gene ID" value="ENSG00000181938.14"/>
</dbReference>
<dbReference type="Ensembl" id="ENST00000426538.6">
    <molecule id="Q9BRX5-3"/>
    <property type="protein sequence ID" value="ENSP00000401018.2"/>
    <property type="gene ID" value="ENSG00000181938.14"/>
</dbReference>
<dbReference type="GeneID" id="64785"/>
<dbReference type="KEGG" id="hsa:64785"/>
<dbReference type="MANE-Select" id="ENST00000318129.6">
    <property type="protein sequence ID" value="ENSP00000318196.6"/>
    <property type="RefSeq nucleotide sequence ID" value="NM_022770.4"/>
    <property type="RefSeq protein sequence ID" value="NP_073607.2"/>
</dbReference>
<dbReference type="UCSC" id="uc002enh.4">
    <molecule id="Q9BRX5-1"/>
    <property type="organism name" value="human"/>
</dbReference>
<dbReference type="AGR" id="HGNC:25851"/>
<dbReference type="CTD" id="64785"/>
<dbReference type="DisGeNET" id="64785"/>
<dbReference type="GeneCards" id="GINS3"/>
<dbReference type="HGNC" id="HGNC:25851">
    <property type="gene designation" value="GINS3"/>
</dbReference>
<dbReference type="HPA" id="ENSG00000181938">
    <property type="expression patterns" value="Low tissue specificity"/>
</dbReference>
<dbReference type="MIM" id="610610">
    <property type="type" value="gene"/>
</dbReference>
<dbReference type="neXtProt" id="NX_Q9BRX5"/>
<dbReference type="OpenTargets" id="ENSG00000181938"/>
<dbReference type="PharmGKB" id="PA145008327"/>
<dbReference type="VEuPathDB" id="HostDB:ENSG00000181938"/>
<dbReference type="GeneTree" id="ENSGT00390000001622"/>
<dbReference type="HOGENOM" id="CLU_1906093_0_0_1"/>
<dbReference type="InParanoid" id="Q9BRX5"/>
<dbReference type="OMA" id="IYKEGWR"/>
<dbReference type="OrthoDB" id="10251744at2759"/>
<dbReference type="PAN-GO" id="Q9BRX5">
    <property type="GO annotations" value="2 GO annotations based on evolutionary models"/>
</dbReference>
<dbReference type="PhylomeDB" id="Q9BRX5"/>
<dbReference type="TreeFam" id="TF314626"/>
<dbReference type="PathwayCommons" id="Q9BRX5"/>
<dbReference type="Reactome" id="R-HSA-176974">
    <property type="pathway name" value="Unwinding of DNA"/>
</dbReference>
<dbReference type="SignaLink" id="Q9BRX5"/>
<dbReference type="BioGRID-ORCS" id="64785">
    <property type="hits" value="734 hits in 1165 CRISPR screens"/>
</dbReference>
<dbReference type="ChiTaRS" id="GINS3">
    <property type="organism name" value="human"/>
</dbReference>
<dbReference type="EvolutionaryTrace" id="Q9BRX5"/>
<dbReference type="GenomeRNAi" id="64785"/>
<dbReference type="Pharos" id="Q9BRX5">
    <property type="development level" value="Tbio"/>
</dbReference>
<dbReference type="PRO" id="PR:Q9BRX5"/>
<dbReference type="Proteomes" id="UP000005640">
    <property type="component" value="Chromosome 16"/>
</dbReference>
<dbReference type="RNAct" id="Q9BRX5">
    <property type="molecule type" value="protein"/>
</dbReference>
<dbReference type="Bgee" id="ENSG00000181938">
    <property type="expression patterns" value="Expressed in oocyte and 173 other cell types or tissues"/>
</dbReference>
<dbReference type="ExpressionAtlas" id="Q9BRX5">
    <property type="expression patterns" value="baseline and differential"/>
</dbReference>
<dbReference type="GO" id="GO:0071162">
    <property type="term" value="C:CMG complex"/>
    <property type="evidence" value="ECO:0000353"/>
    <property type="project" value="ComplexPortal"/>
</dbReference>
<dbReference type="GO" id="GO:0000811">
    <property type="term" value="C:GINS complex"/>
    <property type="evidence" value="ECO:0000353"/>
    <property type="project" value="ComplexPortal"/>
</dbReference>
<dbReference type="GO" id="GO:0005654">
    <property type="term" value="C:nucleoplasm"/>
    <property type="evidence" value="ECO:0000314"/>
    <property type="project" value="HPA"/>
</dbReference>
<dbReference type="GO" id="GO:0005634">
    <property type="term" value="C:nucleus"/>
    <property type="evidence" value="ECO:0000314"/>
    <property type="project" value="ComplexPortal"/>
</dbReference>
<dbReference type="GO" id="GO:0090398">
    <property type="term" value="P:cellular senescence"/>
    <property type="evidence" value="ECO:0007669"/>
    <property type="project" value="Ensembl"/>
</dbReference>
<dbReference type="GO" id="GO:1902975">
    <property type="term" value="P:mitotic DNA replication initiation"/>
    <property type="evidence" value="ECO:0000318"/>
    <property type="project" value="GO_Central"/>
</dbReference>
<dbReference type="GO" id="GO:0035264">
    <property type="term" value="P:multicellular organism growth"/>
    <property type="evidence" value="ECO:0007669"/>
    <property type="project" value="Ensembl"/>
</dbReference>
<dbReference type="CDD" id="cd11713">
    <property type="entry name" value="GINS_A_psf3"/>
    <property type="match status" value="1"/>
</dbReference>
<dbReference type="CDD" id="cd21693">
    <property type="entry name" value="GINS_B_Psf3"/>
    <property type="match status" value="1"/>
</dbReference>
<dbReference type="FunFam" id="1.20.58.2050:FF:000001">
    <property type="entry name" value="DNA replication complex GINS protein PSF3"/>
    <property type="match status" value="1"/>
</dbReference>
<dbReference type="Gene3D" id="1.20.58.2050">
    <property type="match status" value="1"/>
</dbReference>
<dbReference type="InterPro" id="IPR021151">
    <property type="entry name" value="GINS_A"/>
</dbReference>
<dbReference type="InterPro" id="IPR036224">
    <property type="entry name" value="GINS_bundle-like_dom_sf"/>
</dbReference>
<dbReference type="InterPro" id="IPR010492">
    <property type="entry name" value="GINS_Psf3"/>
</dbReference>
<dbReference type="InterPro" id="IPR038437">
    <property type="entry name" value="GINS_Psf3_sf"/>
</dbReference>
<dbReference type="InterPro" id="IPR055221">
    <property type="entry name" value="PSF3_N"/>
</dbReference>
<dbReference type="PANTHER" id="PTHR22768">
    <property type="entry name" value="DNA REPLICATION COMPLEX GINS PROTEIN PSF3"/>
    <property type="match status" value="1"/>
</dbReference>
<dbReference type="PANTHER" id="PTHR22768:SF0">
    <property type="entry name" value="DNA REPLICATION COMPLEX GINS PROTEIN PSF3"/>
    <property type="match status" value="1"/>
</dbReference>
<dbReference type="Pfam" id="PF22466">
    <property type="entry name" value="PSF3_N"/>
    <property type="match status" value="1"/>
</dbReference>
<dbReference type="Pfam" id="PF05916">
    <property type="entry name" value="Sld5"/>
    <property type="match status" value="1"/>
</dbReference>
<dbReference type="SUPFAM" id="SSF158573">
    <property type="entry name" value="GINS helical bundle-like"/>
    <property type="match status" value="1"/>
</dbReference>
<dbReference type="SUPFAM" id="SSF160059">
    <property type="entry name" value="PriA/YqbF domain"/>
    <property type="match status" value="1"/>
</dbReference>
<feature type="chain" id="PRO_0000327615" description="DNA replication complex GINS protein PSF3">
    <location>
        <begin position="1"/>
        <end position="216"/>
    </location>
</feature>
<feature type="region of interest" description="Not essential for folding and stability of GINS complex, but may regulate accessibility to the central complex pore">
    <location>
        <begin position="1"/>
        <end position="16"/>
    </location>
</feature>
<feature type="splice variant" id="VSP_032737" description="In isoform 2." evidence="11 12">
    <location>
        <begin position="62"/>
        <end position="139"/>
    </location>
</feature>
<feature type="splice variant" id="VSP_046694" description="In isoform 3." evidence="13">
    <original>G</original>
    <variation>GFALLPRLECSGVIWLTAALTSQAPEILPPQPPMWLVLQG</variation>
    <location>
        <position position="63"/>
    </location>
</feature>
<feature type="strand" evidence="20">
    <location>
        <begin position="14"/>
        <end position="16"/>
    </location>
</feature>
<feature type="helix" evidence="20">
    <location>
        <begin position="22"/>
        <end position="27"/>
    </location>
</feature>
<feature type="strand" evidence="20">
    <location>
        <begin position="30"/>
        <end position="38"/>
    </location>
</feature>
<feature type="strand" evidence="21">
    <location>
        <begin position="40"/>
        <end position="42"/>
    </location>
</feature>
<feature type="helix" evidence="20">
    <location>
        <begin position="44"/>
        <end position="46"/>
    </location>
</feature>
<feature type="helix" evidence="22">
    <location>
        <begin position="55"/>
        <end position="57"/>
    </location>
</feature>
<feature type="strand" evidence="20">
    <location>
        <begin position="65"/>
        <end position="69"/>
    </location>
</feature>
<feature type="helix" evidence="20">
    <location>
        <begin position="70"/>
        <end position="76"/>
    </location>
</feature>
<feature type="strand" evidence="20">
    <location>
        <begin position="79"/>
        <end position="86"/>
    </location>
</feature>
<feature type="helix" evidence="20">
    <location>
        <begin position="90"/>
        <end position="92"/>
    </location>
</feature>
<feature type="helix" evidence="20">
    <location>
        <begin position="94"/>
        <end position="102"/>
    </location>
</feature>
<feature type="helix" evidence="20">
    <location>
        <begin position="104"/>
        <end position="106"/>
    </location>
</feature>
<feature type="turn" evidence="20">
    <location>
        <begin position="109"/>
        <end position="111"/>
    </location>
</feature>
<feature type="helix" evidence="20">
    <location>
        <begin position="116"/>
        <end position="122"/>
    </location>
</feature>
<feature type="helix" evidence="20">
    <location>
        <begin position="123"/>
        <end position="126"/>
    </location>
</feature>
<feature type="helix" evidence="20">
    <location>
        <begin position="131"/>
        <end position="153"/>
    </location>
</feature>
<feature type="turn" evidence="22">
    <location>
        <begin position="154"/>
        <end position="157"/>
    </location>
</feature>
<feature type="helix" evidence="20">
    <location>
        <begin position="162"/>
        <end position="165"/>
    </location>
</feature>
<feature type="helix" evidence="20">
    <location>
        <begin position="170"/>
        <end position="190"/>
    </location>
</feature>
<name>PSF3_HUMAN</name>
<accession>Q9BRX5</accession>
<accession>B2RDP3</accession>
<accession>E9PB21</accession>
<accession>Q9H870</accession>
<sequence length="216" mass="24535">MSEAYFRVESGALGPEENFLSLDDILMSHEKLPVRTETAMPRLGAFFLERSAGAETDNAVPQGSKLELPLWLAKGLFDNKRRILSVELPKIYQEGWRTVFSADPNVVDLHKMGPHFYGFGSQLLHFDSPENADISQSLLQTFIGRFRRIMDSSQNAYNEDTSALVARLDEMERGLFQTGQKGLNDFQCWEKGQASQITASNLVQNYKKRKFTDMED</sequence>
<keyword id="KW-0002">3D-structure</keyword>
<keyword id="KW-0025">Alternative splicing</keyword>
<keyword id="KW-0158">Chromosome</keyword>
<keyword id="KW-0235">DNA replication</keyword>
<keyword id="KW-0539">Nucleus</keyword>
<keyword id="KW-1267">Proteomics identification</keyword>
<keyword id="KW-1185">Reference proteome</keyword>
<evidence type="ECO:0000269" key="1">
    <source>
    </source>
</evidence>
<evidence type="ECO:0000269" key="2">
    <source>
    </source>
</evidence>
<evidence type="ECO:0000269" key="3">
    <source>
    </source>
</evidence>
<evidence type="ECO:0000269" key="4">
    <source>
    </source>
</evidence>
<evidence type="ECO:0000269" key="5">
    <source>
    </source>
</evidence>
<evidence type="ECO:0000269" key="6">
    <source>
    </source>
</evidence>
<evidence type="ECO:0000269" key="7">
    <source>
    </source>
</evidence>
<evidence type="ECO:0000269" key="8">
    <source>
    </source>
</evidence>
<evidence type="ECO:0000269" key="9">
    <source>
    </source>
</evidence>
<evidence type="ECO:0000269" key="10">
    <source>
    </source>
</evidence>
<evidence type="ECO:0000303" key="11">
    <source>
    </source>
</evidence>
<evidence type="ECO:0000303" key="12">
    <source ref="2"/>
</evidence>
<evidence type="ECO:0000305" key="13"/>
<evidence type="ECO:0000305" key="14">
    <source>
    </source>
</evidence>
<evidence type="ECO:0000312" key="15">
    <source>
        <dbReference type="HGNC" id="HGNC:25851"/>
    </source>
</evidence>
<evidence type="ECO:0007744" key="16">
    <source>
        <dbReference type="PDB" id="6XTX"/>
    </source>
</evidence>
<evidence type="ECO:0007744" key="17">
    <source>
        <dbReference type="PDB" id="6XTY"/>
    </source>
</evidence>
<evidence type="ECO:0007744" key="18">
    <source>
        <dbReference type="PDB" id="7PFO"/>
    </source>
</evidence>
<evidence type="ECO:0007744" key="19">
    <source>
        <dbReference type="PDB" id="7PLO"/>
    </source>
</evidence>
<evidence type="ECO:0007829" key="20">
    <source>
        <dbReference type="PDB" id="2E9X"/>
    </source>
</evidence>
<evidence type="ECO:0007829" key="21">
    <source>
        <dbReference type="PDB" id="2EHO"/>
    </source>
</evidence>
<evidence type="ECO:0007829" key="22">
    <source>
        <dbReference type="PDB" id="2Q9Q"/>
    </source>
</evidence>
<comment type="function">
    <text evidence="2 6 7 8 9 10">Required for correct functioning of the GINS complex, a complex that plays an essential role in the initiation of DNA replication, and progression of DNA replication forks (PubMed:17417653, PubMed:28414293). GINS complex is a core component of CDC45-MCM-GINS (CMG) helicase, the molecular machine that unwinds template DNA during replication, and around which the replisome is built (PubMed:32453425, PubMed:34694004, PubMed:34700328, PubMed:35585232).</text>
</comment>
<comment type="subunit">
    <text evidence="1 2 3 4 5 6 7 8 9">Component of the GINS complex which is a heterotetramer of GINS1, GINS2, GINS3 and GINS4 (PubMed:17170760, PubMed:17417653, PubMed:17545466, PubMed:17557111, PubMed:17652513, PubMed:28414293, PubMed:32453425). Forms a stable subcomplex with GINS2 (PubMed:17170760, PubMed:17417653, PubMed:17545466, PubMed:17557111, PubMed:17652513, PubMed:28414293). GINS complex interacts with DNA primase in vitro (PubMed:17170760, PubMed:17417653, PubMed:17545466, PubMed:17557111, PubMed:17652513, PubMed:28414293). Component of the CMG helicase complex, a hexameric ring of related MCM2-7 subunits stabilized by CDC45 and the tetrameric GINS complex (PubMed:32453425, PubMed:34694004, PubMed:34700328).</text>
</comment>
<comment type="interaction">
    <interactant intactId="EBI-2857315">
        <id>Q9BRX5</id>
    </interactant>
    <interactant intactId="EBI-10988864">
        <id>P46379-2</id>
        <label>BAG6</label>
    </interactant>
    <organismsDiffer>false</organismsDiffer>
    <experiments>3</experiments>
</comment>
<comment type="interaction">
    <interactant intactId="EBI-2857315">
        <id>Q9BRX5</id>
    </interactant>
    <interactant intactId="EBI-11962928">
        <id>Q9UI47-2</id>
        <label>CTNNA3</label>
    </interactant>
    <organismsDiffer>false</organismsDiffer>
    <experiments>3</experiments>
</comment>
<comment type="interaction">
    <interactant intactId="EBI-2857315">
        <id>Q9BRX5</id>
    </interactant>
    <interactant intactId="EBI-12593112">
        <id>O75190-2</id>
        <label>DNAJB6</label>
    </interactant>
    <organismsDiffer>false</organismsDiffer>
    <experiments>3</experiments>
</comment>
<comment type="interaction">
    <interactant intactId="EBI-2857315">
        <id>Q9BRX5</id>
    </interactant>
    <interactant intactId="EBI-395638">
        <id>O14645</id>
        <label>DNALI1</label>
    </interactant>
    <organismsDiffer>false</organismsDiffer>
    <experiments>3</experiments>
</comment>
<comment type="interaction">
    <interactant intactId="EBI-2857315">
        <id>Q9BRX5</id>
    </interactant>
    <interactant intactId="EBI-6398041">
        <id>Q9UMF0</id>
        <label>ICAM5</label>
    </interactant>
    <organismsDiffer>false</organismsDiffer>
    <experiments>3</experiments>
</comment>
<comment type="interaction">
    <interactant intactId="EBI-2857315">
        <id>Q9BRX5</id>
    </interactant>
    <interactant intactId="EBI-948266">
        <id>O14901</id>
        <label>KLF11</label>
    </interactant>
    <organismsDiffer>false</organismsDiffer>
    <experiments>3</experiments>
</comment>
<comment type="interaction">
    <interactant intactId="EBI-2857315">
        <id>Q9BRX5</id>
    </interactant>
    <interactant intactId="EBI-11999246">
        <id>Q6KB66-2</id>
        <label>KRT80</label>
    </interactant>
    <organismsDiffer>false</organismsDiffer>
    <experiments>3</experiments>
</comment>
<comment type="interaction">
    <interactant intactId="EBI-2857315">
        <id>Q9BRX5</id>
    </interactant>
    <interactant intactId="EBI-374819">
        <id>P49736</id>
        <label>MCM2</label>
    </interactant>
    <organismsDiffer>false</organismsDiffer>
    <experiments>2</experiments>
</comment>
<comment type="interaction">
    <interactant intactId="EBI-2857315">
        <id>Q9BRX5</id>
    </interactant>
    <interactant intactId="EBI-7950783">
        <id>Q96JP2</id>
        <label>MYO15B</label>
    </interactant>
    <organismsDiffer>false</organismsDiffer>
    <experiments>3</experiments>
</comment>
<comment type="interaction">
    <interactant intactId="EBI-2857315">
        <id>Q9BRX5</id>
    </interactant>
    <interactant intactId="EBI-2811583">
        <id>Q9BVL2</id>
        <label>NUP58</label>
    </interactant>
    <organismsDiffer>false</organismsDiffer>
    <experiments>3</experiments>
</comment>
<comment type="interaction">
    <interactant intactId="EBI-2857315">
        <id>Q9BRX5</id>
    </interactant>
    <interactant intactId="EBI-358489">
        <id>Q96GM5</id>
        <label>SMARCD1</label>
    </interactant>
    <organismsDiffer>false</organismsDiffer>
    <experiments>3</experiments>
</comment>
<comment type="interaction">
    <interactant intactId="EBI-2857315">
        <id>Q9BRX5</id>
    </interactant>
    <interactant intactId="EBI-8451480">
        <id>O75865-2</id>
        <label>TRAPPC6A</label>
    </interactant>
    <organismsDiffer>false</organismsDiffer>
    <experiments>3</experiments>
</comment>
<comment type="interaction">
    <interactant intactId="EBI-2857315">
        <id>Q9BRX5</id>
    </interactant>
    <interactant intactId="EBI-743128">
        <id>P14927</id>
        <label>UQCRB</label>
    </interactant>
    <organismsDiffer>false</organismsDiffer>
    <experiments>3</experiments>
</comment>
<comment type="interaction">
    <interactant intactId="EBI-2857315">
        <id>Q9BRX5</id>
    </interactant>
    <interactant intactId="EBI-2107455">
        <id>Q08AM6</id>
        <label>VAC14</label>
    </interactant>
    <organismsDiffer>false</organismsDiffer>
    <experiments>6</experiments>
</comment>
<comment type="interaction">
    <interactant intactId="EBI-16436971">
        <id>Q9BRX5-3</id>
    </interactant>
    <interactant intactId="EBI-16439278">
        <id>Q6FHY5</id>
        <label>MEOX2</label>
    </interactant>
    <organismsDiffer>false</organismsDiffer>
    <experiments>3</experiments>
</comment>
<comment type="interaction">
    <interactant intactId="EBI-16436971">
        <id>Q9BRX5-3</id>
    </interactant>
    <interactant intactId="EBI-2107455">
        <id>Q08AM6</id>
        <label>VAC14</label>
    </interactant>
    <organismsDiffer>false</organismsDiffer>
    <experiments>3</experiments>
</comment>
<comment type="subcellular location">
    <subcellularLocation>
        <location evidence="14">Nucleus</location>
    </subcellularLocation>
    <subcellularLocation>
        <location evidence="14">Chromosome</location>
    </subcellularLocation>
    <text evidence="14">Associates with chromatin.</text>
</comment>
<comment type="alternative products">
    <event type="alternative splicing"/>
    <isoform>
        <id>Q9BRX5-1</id>
        <name>1</name>
        <sequence type="displayed"/>
    </isoform>
    <isoform>
        <id>Q9BRX5-2</id>
        <name>2</name>
        <sequence type="described" ref="VSP_032737"/>
    </isoform>
    <isoform>
        <id>Q9BRX5-3</id>
        <name>3</name>
        <sequence type="described" ref="VSP_046694"/>
    </isoform>
</comment>
<comment type="mass spectrometry" mass="98373.0" error="13.0" method="Electrospray" evidence="4">
    <text>This is the measured mass for the GINS complex.</text>
</comment>
<comment type="similarity">
    <text evidence="13">Belongs to the GINS3/PSF3 family.</text>
</comment>